<gene>
    <name type="primary">chic</name>
    <name type="synonym">chi</name>
    <name type="ORF">CG9553</name>
</gene>
<proteinExistence type="evidence at protein level"/>
<protein>
    <recommendedName>
        <fullName>Profilin</fullName>
    </recommendedName>
    <alternativeName>
        <fullName>Protein chickadee</fullName>
    </alternativeName>
</protein>
<keyword id="KW-0009">Actin-binding</keyword>
<keyword id="KW-0963">Cytoplasm</keyword>
<keyword id="KW-0206">Cytoskeleton</keyword>
<keyword id="KW-1185">Reference proteome</keyword>
<reference key="1">
    <citation type="journal article" date="1992" name="Cell">
        <title>Chickadee encodes a profilin required for intercellular cytoplasm transport during Drosophila oogenesis.</title>
        <authorList>
            <person name="Cooley L."/>
            <person name="Verheyen E."/>
            <person name="Caverly K."/>
        </authorList>
    </citation>
    <scope>NUCLEOTIDE SEQUENCE [MRNA]</scope>
</reference>
<reference key="2">
    <citation type="journal article" date="2005" name="Mol. Biol. Evol.">
        <title>Rapidly evolving genes of Drosophila: differing levels of selective pressure in testis, ovary, and head tissues between sibling species.</title>
        <authorList>
            <person name="Jagadeeshan S."/>
            <person name="Singh R.S."/>
        </authorList>
    </citation>
    <scope>NUCLEOTIDE SEQUENCE [MRNA]</scope>
    <scope>TISSUE SPECIFICITY</scope>
    <source>
        <tissue>Head</tissue>
    </source>
</reference>
<reference key="3">
    <citation type="journal article" date="2000" name="Science">
        <title>The genome sequence of Drosophila melanogaster.</title>
        <authorList>
            <person name="Adams M.D."/>
            <person name="Celniker S.E."/>
            <person name="Holt R.A."/>
            <person name="Evans C.A."/>
            <person name="Gocayne J.D."/>
            <person name="Amanatides P.G."/>
            <person name="Scherer S.E."/>
            <person name="Li P.W."/>
            <person name="Hoskins R.A."/>
            <person name="Galle R.F."/>
            <person name="George R.A."/>
            <person name="Lewis S.E."/>
            <person name="Richards S."/>
            <person name="Ashburner M."/>
            <person name="Henderson S.N."/>
            <person name="Sutton G.G."/>
            <person name="Wortman J.R."/>
            <person name="Yandell M.D."/>
            <person name="Zhang Q."/>
            <person name="Chen L.X."/>
            <person name="Brandon R.C."/>
            <person name="Rogers Y.-H.C."/>
            <person name="Blazej R.G."/>
            <person name="Champe M."/>
            <person name="Pfeiffer B.D."/>
            <person name="Wan K.H."/>
            <person name="Doyle C."/>
            <person name="Baxter E.G."/>
            <person name="Helt G."/>
            <person name="Nelson C.R."/>
            <person name="Miklos G.L.G."/>
            <person name="Abril J.F."/>
            <person name="Agbayani A."/>
            <person name="An H.-J."/>
            <person name="Andrews-Pfannkoch C."/>
            <person name="Baldwin D."/>
            <person name="Ballew R.M."/>
            <person name="Basu A."/>
            <person name="Baxendale J."/>
            <person name="Bayraktaroglu L."/>
            <person name="Beasley E.M."/>
            <person name="Beeson K.Y."/>
            <person name="Benos P.V."/>
            <person name="Berman B.P."/>
            <person name="Bhandari D."/>
            <person name="Bolshakov S."/>
            <person name="Borkova D."/>
            <person name="Botchan M.R."/>
            <person name="Bouck J."/>
            <person name="Brokstein P."/>
            <person name="Brottier P."/>
            <person name="Burtis K.C."/>
            <person name="Busam D.A."/>
            <person name="Butler H."/>
            <person name="Cadieu E."/>
            <person name="Center A."/>
            <person name="Chandra I."/>
            <person name="Cherry J.M."/>
            <person name="Cawley S."/>
            <person name="Dahlke C."/>
            <person name="Davenport L.B."/>
            <person name="Davies P."/>
            <person name="de Pablos B."/>
            <person name="Delcher A."/>
            <person name="Deng Z."/>
            <person name="Mays A.D."/>
            <person name="Dew I."/>
            <person name="Dietz S.M."/>
            <person name="Dodson K."/>
            <person name="Doup L.E."/>
            <person name="Downes M."/>
            <person name="Dugan-Rocha S."/>
            <person name="Dunkov B.C."/>
            <person name="Dunn P."/>
            <person name="Durbin K.J."/>
            <person name="Evangelista C.C."/>
            <person name="Ferraz C."/>
            <person name="Ferriera S."/>
            <person name="Fleischmann W."/>
            <person name="Fosler C."/>
            <person name="Gabrielian A.E."/>
            <person name="Garg N.S."/>
            <person name="Gelbart W.M."/>
            <person name="Glasser K."/>
            <person name="Glodek A."/>
            <person name="Gong F."/>
            <person name="Gorrell J.H."/>
            <person name="Gu Z."/>
            <person name="Guan P."/>
            <person name="Harris M."/>
            <person name="Harris N.L."/>
            <person name="Harvey D.A."/>
            <person name="Heiman T.J."/>
            <person name="Hernandez J.R."/>
            <person name="Houck J."/>
            <person name="Hostin D."/>
            <person name="Houston K.A."/>
            <person name="Howland T.J."/>
            <person name="Wei M.-H."/>
            <person name="Ibegwam C."/>
            <person name="Jalali M."/>
            <person name="Kalush F."/>
            <person name="Karpen G.H."/>
            <person name="Ke Z."/>
            <person name="Kennison J.A."/>
            <person name="Ketchum K.A."/>
            <person name="Kimmel B.E."/>
            <person name="Kodira C.D."/>
            <person name="Kraft C.L."/>
            <person name="Kravitz S."/>
            <person name="Kulp D."/>
            <person name="Lai Z."/>
            <person name="Lasko P."/>
            <person name="Lei Y."/>
            <person name="Levitsky A.A."/>
            <person name="Li J.H."/>
            <person name="Li Z."/>
            <person name="Liang Y."/>
            <person name="Lin X."/>
            <person name="Liu X."/>
            <person name="Mattei B."/>
            <person name="McIntosh T.C."/>
            <person name="McLeod M.P."/>
            <person name="McPherson D."/>
            <person name="Merkulov G."/>
            <person name="Milshina N.V."/>
            <person name="Mobarry C."/>
            <person name="Morris J."/>
            <person name="Moshrefi A."/>
            <person name="Mount S.M."/>
            <person name="Moy M."/>
            <person name="Murphy B."/>
            <person name="Murphy L."/>
            <person name="Muzny D.M."/>
            <person name="Nelson D.L."/>
            <person name="Nelson D.R."/>
            <person name="Nelson K.A."/>
            <person name="Nixon K."/>
            <person name="Nusskern D.R."/>
            <person name="Pacleb J.M."/>
            <person name="Palazzolo M."/>
            <person name="Pittman G.S."/>
            <person name="Pan S."/>
            <person name="Pollard J."/>
            <person name="Puri V."/>
            <person name="Reese M.G."/>
            <person name="Reinert K."/>
            <person name="Remington K."/>
            <person name="Saunders R.D.C."/>
            <person name="Scheeler F."/>
            <person name="Shen H."/>
            <person name="Shue B.C."/>
            <person name="Siden-Kiamos I."/>
            <person name="Simpson M."/>
            <person name="Skupski M.P."/>
            <person name="Smith T.J."/>
            <person name="Spier E."/>
            <person name="Spradling A.C."/>
            <person name="Stapleton M."/>
            <person name="Strong R."/>
            <person name="Sun E."/>
            <person name="Svirskas R."/>
            <person name="Tector C."/>
            <person name="Turner R."/>
            <person name="Venter E."/>
            <person name="Wang A.H."/>
            <person name="Wang X."/>
            <person name="Wang Z.-Y."/>
            <person name="Wassarman D.A."/>
            <person name="Weinstock G.M."/>
            <person name="Weissenbach J."/>
            <person name="Williams S.M."/>
            <person name="Woodage T."/>
            <person name="Worley K.C."/>
            <person name="Wu D."/>
            <person name="Yang S."/>
            <person name="Yao Q.A."/>
            <person name="Ye J."/>
            <person name="Yeh R.-F."/>
            <person name="Zaveri J.S."/>
            <person name="Zhan M."/>
            <person name="Zhang G."/>
            <person name="Zhao Q."/>
            <person name="Zheng L."/>
            <person name="Zheng X.H."/>
            <person name="Zhong F.N."/>
            <person name="Zhong W."/>
            <person name="Zhou X."/>
            <person name="Zhu S.C."/>
            <person name="Zhu X."/>
            <person name="Smith H.O."/>
            <person name="Gibbs R.A."/>
            <person name="Myers E.W."/>
            <person name="Rubin G.M."/>
            <person name="Venter J.C."/>
        </authorList>
    </citation>
    <scope>NUCLEOTIDE SEQUENCE [LARGE SCALE GENOMIC DNA]</scope>
    <source>
        <strain>Berkeley</strain>
    </source>
</reference>
<reference key="4">
    <citation type="journal article" date="2002" name="Genome Biol.">
        <title>Annotation of the Drosophila melanogaster euchromatic genome: a systematic review.</title>
        <authorList>
            <person name="Misra S."/>
            <person name="Crosby M.A."/>
            <person name="Mungall C.J."/>
            <person name="Matthews B.B."/>
            <person name="Campbell K.S."/>
            <person name="Hradecky P."/>
            <person name="Huang Y."/>
            <person name="Kaminker J.S."/>
            <person name="Millburn G.H."/>
            <person name="Prochnik S.E."/>
            <person name="Smith C.D."/>
            <person name="Tupy J.L."/>
            <person name="Whitfield E.J."/>
            <person name="Bayraktaroglu L."/>
            <person name="Berman B.P."/>
            <person name="Bettencourt B.R."/>
            <person name="Celniker S.E."/>
            <person name="de Grey A.D.N.J."/>
            <person name="Drysdale R.A."/>
            <person name="Harris N.L."/>
            <person name="Richter J."/>
            <person name="Russo S."/>
            <person name="Schroeder A.J."/>
            <person name="Shu S.Q."/>
            <person name="Stapleton M."/>
            <person name="Yamada C."/>
            <person name="Ashburner M."/>
            <person name="Gelbart W.M."/>
            <person name="Rubin G.M."/>
            <person name="Lewis S.E."/>
        </authorList>
    </citation>
    <scope>GENOME REANNOTATION</scope>
    <source>
        <strain>Berkeley</strain>
    </source>
</reference>
<reference key="5">
    <citation type="journal article" date="2002" name="Genome Biol.">
        <title>A Drosophila full-length cDNA resource.</title>
        <authorList>
            <person name="Stapleton M."/>
            <person name="Carlson J.W."/>
            <person name="Brokstein P."/>
            <person name="Yu C."/>
            <person name="Champe M."/>
            <person name="George R.A."/>
            <person name="Guarin H."/>
            <person name="Kronmiller B."/>
            <person name="Pacleb J.M."/>
            <person name="Park S."/>
            <person name="Wan K.H."/>
            <person name="Rubin G.M."/>
            <person name="Celniker S.E."/>
        </authorList>
    </citation>
    <scope>NUCLEOTIDE SEQUENCE [LARGE SCALE MRNA]</scope>
    <source>
        <strain>Berkeley</strain>
        <tissue>Embryo</tissue>
    </source>
</reference>
<reference key="6">
    <citation type="journal article" date="2023" name="Sci. Rep.">
        <title>Adult expression of Semaphorins and Plexins is essential for motor neuron survival.</title>
        <authorList>
            <person name="Vaikakkara Chithran A."/>
            <person name="Allan D.W."/>
            <person name="O'Connor T.P."/>
        </authorList>
    </citation>
    <scope>FUNCTION</scope>
    <scope>DISRUPTION PHENOTYPE</scope>
</reference>
<name>PROF_DROME</name>
<accession>P25843</accession>
<accession>Q3YMV6</accession>
<accession>Q9VMJ9</accession>
<feature type="chain" id="PRO_0000199597" description="Profilin">
    <location>
        <begin position="1"/>
        <end position="126"/>
    </location>
</feature>
<dbReference type="EMBL" id="M84528">
    <property type="protein sequence ID" value="AAA28418.1"/>
    <property type="molecule type" value="mRNA"/>
</dbReference>
<dbReference type="EMBL" id="M84529">
    <property type="protein sequence ID" value="AAA28419.1"/>
    <property type="molecule type" value="mRNA"/>
</dbReference>
<dbReference type="EMBL" id="DQ062770">
    <property type="protein sequence ID" value="AAY56643.1"/>
    <property type="molecule type" value="mRNA"/>
</dbReference>
<dbReference type="EMBL" id="AE014134">
    <property type="protein sequence ID" value="AAF52315.1"/>
    <property type="molecule type" value="Genomic_DNA"/>
</dbReference>
<dbReference type="EMBL" id="AE014134">
    <property type="protein sequence ID" value="AAF52316.1"/>
    <property type="molecule type" value="Genomic_DNA"/>
</dbReference>
<dbReference type="EMBL" id="AE014134">
    <property type="protein sequence ID" value="AAN10565.1"/>
    <property type="molecule type" value="Genomic_DNA"/>
</dbReference>
<dbReference type="EMBL" id="AE014134">
    <property type="protein sequence ID" value="AAS64643.1"/>
    <property type="molecule type" value="Genomic_DNA"/>
</dbReference>
<dbReference type="EMBL" id="AY069444">
    <property type="protein sequence ID" value="AAL39589.1"/>
    <property type="molecule type" value="mRNA"/>
</dbReference>
<dbReference type="EMBL" id="AY128443">
    <property type="protein sequence ID" value="AAM75036.1"/>
    <property type="molecule type" value="mRNA"/>
</dbReference>
<dbReference type="PIR" id="A38154">
    <property type="entry name" value="A38154"/>
</dbReference>
<dbReference type="RefSeq" id="NP_001245905.1">
    <property type="nucleotide sequence ID" value="NM_001258976.2"/>
</dbReference>
<dbReference type="RefSeq" id="NP_001245906.1">
    <property type="nucleotide sequence ID" value="NM_001258977.2"/>
</dbReference>
<dbReference type="RefSeq" id="NP_477016.1">
    <property type="nucleotide sequence ID" value="NM_057668.6"/>
</dbReference>
<dbReference type="RefSeq" id="NP_599131.1">
    <property type="nucleotide sequence ID" value="NM_134304.3"/>
</dbReference>
<dbReference type="RefSeq" id="NP_723136.1">
    <property type="nucleotide sequence ID" value="NM_164667.2"/>
</dbReference>
<dbReference type="RefSeq" id="NP_995635.1">
    <property type="nucleotide sequence ID" value="NM_205913.3"/>
</dbReference>
<dbReference type="SMR" id="P25843"/>
<dbReference type="BioGRID" id="59999">
    <property type="interactions" value="72"/>
</dbReference>
<dbReference type="DIP" id="DIP-22165N"/>
<dbReference type="FunCoup" id="P25843">
    <property type="interactions" value="372"/>
</dbReference>
<dbReference type="IntAct" id="P25843">
    <property type="interactions" value="181"/>
</dbReference>
<dbReference type="STRING" id="7227.FBpp0089196"/>
<dbReference type="PaxDb" id="7227-FBpp0089196"/>
<dbReference type="DNASU" id="33834"/>
<dbReference type="EnsemblMetazoa" id="FBtr0079233">
    <property type="protein sequence ID" value="FBpp0078864"/>
    <property type="gene ID" value="FBgn0000308"/>
</dbReference>
<dbReference type="EnsemblMetazoa" id="FBtr0079234">
    <property type="protein sequence ID" value="FBpp0078865"/>
    <property type="gene ID" value="FBgn0000308"/>
</dbReference>
<dbReference type="EnsemblMetazoa" id="FBtr0079235">
    <property type="protein sequence ID" value="FBpp0078866"/>
    <property type="gene ID" value="FBgn0000308"/>
</dbReference>
<dbReference type="EnsemblMetazoa" id="FBtr0079236">
    <property type="protein sequence ID" value="FBpp0089196"/>
    <property type="gene ID" value="FBgn0000308"/>
</dbReference>
<dbReference type="EnsemblMetazoa" id="FBtr0309212">
    <property type="protein sequence ID" value="FBpp0301151"/>
    <property type="gene ID" value="FBgn0000308"/>
</dbReference>
<dbReference type="EnsemblMetazoa" id="FBtr0309213">
    <property type="protein sequence ID" value="FBpp0301152"/>
    <property type="gene ID" value="FBgn0000308"/>
</dbReference>
<dbReference type="GeneID" id="33834"/>
<dbReference type="KEGG" id="dme:Dmel_CG9553"/>
<dbReference type="UCSC" id="CG9553-RA">
    <property type="organism name" value="d. melanogaster"/>
</dbReference>
<dbReference type="AGR" id="FB:FBgn0000308"/>
<dbReference type="CTD" id="33834"/>
<dbReference type="FlyBase" id="FBgn0000308">
    <property type="gene designation" value="chic"/>
</dbReference>
<dbReference type="VEuPathDB" id="VectorBase:FBgn0000308"/>
<dbReference type="eggNOG" id="KOG1755">
    <property type="taxonomic scope" value="Eukaryota"/>
</dbReference>
<dbReference type="GeneTree" id="ENSGT00730000112841"/>
<dbReference type="HOGENOM" id="CLU_120772_1_1_1"/>
<dbReference type="InParanoid" id="P25843"/>
<dbReference type="OMA" id="HHAENVQ"/>
<dbReference type="OrthoDB" id="421374at2759"/>
<dbReference type="PhylomeDB" id="P25843"/>
<dbReference type="SignaLink" id="P25843"/>
<dbReference type="BioGRID-ORCS" id="33834">
    <property type="hits" value="1 hit in 1 CRISPR screen"/>
</dbReference>
<dbReference type="ChiTaRS" id="chic">
    <property type="organism name" value="fly"/>
</dbReference>
<dbReference type="GenomeRNAi" id="33834"/>
<dbReference type="PRO" id="PR:P25843"/>
<dbReference type="Proteomes" id="UP000000803">
    <property type="component" value="Chromosome 2L"/>
</dbReference>
<dbReference type="Bgee" id="FBgn0000308">
    <property type="expression patterns" value="Expressed in adult differentiating enterocyte in digestive tract and 286 other cell types or tissues"/>
</dbReference>
<dbReference type="ExpressionAtlas" id="P25843">
    <property type="expression patterns" value="baseline and differential"/>
</dbReference>
<dbReference type="GO" id="GO:0005938">
    <property type="term" value="C:cell cortex"/>
    <property type="evidence" value="ECO:0000318"/>
    <property type="project" value="GO_Central"/>
</dbReference>
<dbReference type="GO" id="GO:0005737">
    <property type="term" value="C:cytoplasm"/>
    <property type="evidence" value="ECO:0000314"/>
    <property type="project" value="FlyBase"/>
</dbReference>
<dbReference type="GO" id="GO:0005856">
    <property type="term" value="C:cytoskeleton"/>
    <property type="evidence" value="ECO:0007669"/>
    <property type="project" value="UniProtKB-SubCell"/>
</dbReference>
<dbReference type="GO" id="GO:0043005">
    <property type="term" value="C:neuron projection"/>
    <property type="evidence" value="ECO:0000314"/>
    <property type="project" value="FlyBase"/>
</dbReference>
<dbReference type="GO" id="GO:0048471">
    <property type="term" value="C:perinuclear region of cytoplasm"/>
    <property type="evidence" value="ECO:0000314"/>
    <property type="project" value="FlyBase"/>
</dbReference>
<dbReference type="GO" id="GO:0003785">
    <property type="term" value="F:actin monomer binding"/>
    <property type="evidence" value="ECO:0000318"/>
    <property type="project" value="GO_Central"/>
</dbReference>
<dbReference type="GO" id="GO:0007015">
    <property type="term" value="P:actin filament organization"/>
    <property type="evidence" value="ECO:0000315"/>
    <property type="project" value="FlyBase"/>
</dbReference>
<dbReference type="GO" id="GO:0030041">
    <property type="term" value="P:actin filament polymerization"/>
    <property type="evidence" value="ECO:0000304"/>
    <property type="project" value="FlyBase"/>
</dbReference>
<dbReference type="GO" id="GO:0000915">
    <property type="term" value="P:actomyosin contractile ring assembly"/>
    <property type="evidence" value="ECO:0000304"/>
    <property type="project" value="FlyBase"/>
</dbReference>
<dbReference type="GO" id="GO:0007420">
    <property type="term" value="P:brain development"/>
    <property type="evidence" value="ECO:0000315"/>
    <property type="project" value="FlyBase"/>
</dbReference>
<dbReference type="GO" id="GO:0000902">
    <property type="term" value="P:cell morphogenesis"/>
    <property type="evidence" value="ECO:0000315"/>
    <property type="project" value="FlyBase"/>
</dbReference>
<dbReference type="GO" id="GO:0007391">
    <property type="term" value="P:dorsal closure"/>
    <property type="evidence" value="ECO:0000304"/>
    <property type="project" value="FlyBase"/>
</dbReference>
<dbReference type="GO" id="GO:0007488">
    <property type="term" value="P:histoblast morphogenesis"/>
    <property type="evidence" value="ECO:0000315"/>
    <property type="project" value="FlyBase"/>
</dbReference>
<dbReference type="GO" id="GO:0035193">
    <property type="term" value="P:larval central nervous system remodeling"/>
    <property type="evidence" value="ECO:0000316"/>
    <property type="project" value="FlyBase"/>
</dbReference>
<dbReference type="GO" id="GO:0007436">
    <property type="term" value="P:larval salivary gland morphogenesis"/>
    <property type="evidence" value="ECO:0000315"/>
    <property type="project" value="FlyBase"/>
</dbReference>
<dbReference type="GO" id="GO:0032507">
    <property type="term" value="P:maintenance of protein location in cell"/>
    <property type="evidence" value="ECO:0000315"/>
    <property type="project" value="FlyBase"/>
</dbReference>
<dbReference type="GO" id="GO:0036098">
    <property type="term" value="P:male germ-line stem cell population maintenance"/>
    <property type="evidence" value="ECO:0000315"/>
    <property type="project" value="FlyBase"/>
</dbReference>
<dbReference type="GO" id="GO:0000281">
    <property type="term" value="P:mitotic cytokinesis"/>
    <property type="evidence" value="ECO:0000315"/>
    <property type="project" value="FlyBase"/>
</dbReference>
<dbReference type="GO" id="GO:0016322">
    <property type="term" value="P:neuron remodeling"/>
    <property type="evidence" value="ECO:0000315"/>
    <property type="project" value="FlyBase"/>
</dbReference>
<dbReference type="GO" id="GO:0030717">
    <property type="term" value="P:oocyte karyosome formation"/>
    <property type="evidence" value="ECO:0000315"/>
    <property type="project" value="FlyBase"/>
</dbReference>
<dbReference type="GO" id="GO:0007300">
    <property type="term" value="P:ovarian nurse cell to oocyte transport"/>
    <property type="evidence" value="ECO:0007001"/>
    <property type="project" value="FlyBase"/>
</dbReference>
<dbReference type="GO" id="GO:0045451">
    <property type="term" value="P:pole plasm oskar mRNA localization"/>
    <property type="evidence" value="ECO:0000304"/>
    <property type="project" value="FlyBase"/>
</dbReference>
<dbReference type="GO" id="GO:0048842">
    <property type="term" value="P:positive regulation of axon extension involved in axon guidance"/>
    <property type="evidence" value="ECO:0000315"/>
    <property type="project" value="CACAO"/>
</dbReference>
<dbReference type="GO" id="GO:0048680">
    <property type="term" value="P:positive regulation of axon regeneration"/>
    <property type="evidence" value="ECO:0000315"/>
    <property type="project" value="FlyBase"/>
</dbReference>
<dbReference type="GO" id="GO:0051491">
    <property type="term" value="P:positive regulation of filopodium assembly"/>
    <property type="evidence" value="ECO:0000315"/>
    <property type="project" value="FlyBase"/>
</dbReference>
<dbReference type="GO" id="GO:0035019">
    <property type="term" value="P:somatic stem cell population maintenance"/>
    <property type="evidence" value="ECO:0000315"/>
    <property type="project" value="FlyBase"/>
</dbReference>
<dbReference type="GO" id="GO:0042060">
    <property type="term" value="P:wound healing"/>
    <property type="evidence" value="ECO:0000315"/>
    <property type="project" value="FlyBase"/>
</dbReference>
<dbReference type="CDD" id="cd00148">
    <property type="entry name" value="PROF"/>
    <property type="match status" value="1"/>
</dbReference>
<dbReference type="FunFam" id="3.30.450.30:FF:000001">
    <property type="entry name" value="Profilin"/>
    <property type="match status" value="1"/>
</dbReference>
<dbReference type="Gene3D" id="3.30.450.30">
    <property type="entry name" value="Dynein light chain 2a, cytoplasmic"/>
    <property type="match status" value="1"/>
</dbReference>
<dbReference type="InterPro" id="IPR048278">
    <property type="entry name" value="PFN"/>
</dbReference>
<dbReference type="InterPro" id="IPR005455">
    <property type="entry name" value="PFN_euk"/>
</dbReference>
<dbReference type="InterPro" id="IPR036140">
    <property type="entry name" value="PFN_sf"/>
</dbReference>
<dbReference type="InterPro" id="IPR027310">
    <property type="entry name" value="Profilin_CS"/>
</dbReference>
<dbReference type="PANTHER" id="PTHR11604">
    <property type="entry name" value="PROFILIN"/>
    <property type="match status" value="1"/>
</dbReference>
<dbReference type="PANTHER" id="PTHR11604:SF0">
    <property type="entry name" value="PROFILIN"/>
    <property type="match status" value="1"/>
</dbReference>
<dbReference type="Pfam" id="PF00235">
    <property type="entry name" value="Profilin"/>
    <property type="match status" value="1"/>
</dbReference>
<dbReference type="PRINTS" id="PR00392">
    <property type="entry name" value="PROFILIN"/>
</dbReference>
<dbReference type="PRINTS" id="PR01640">
    <property type="entry name" value="PROFILINPLNT"/>
</dbReference>
<dbReference type="SMART" id="SM00392">
    <property type="entry name" value="PROF"/>
    <property type="match status" value="1"/>
</dbReference>
<dbReference type="SUPFAM" id="SSF55770">
    <property type="entry name" value="Profilin (actin-binding protein)"/>
    <property type="match status" value="1"/>
</dbReference>
<dbReference type="PROSITE" id="PS00414">
    <property type="entry name" value="PROFILIN"/>
    <property type="match status" value="1"/>
</dbReference>
<evidence type="ECO:0000269" key="1">
    <source>
    </source>
</evidence>
<evidence type="ECO:0000269" key="2">
    <source>
    </source>
</evidence>
<evidence type="ECO:0000269" key="3">
    <source>
    </source>
</evidence>
<evidence type="ECO:0000305" key="4"/>
<sequence length="126" mass="13723">MSWQDYVDNQLLASQCVTKACIAGHDGNIWAQSSGFEVTKEELSKLISGFDQQDGLTSNGVTLAGQRYIYLSGTDRVVRAKLGRSGVHCMKTTQAVIVSIYEDPVQPQQAASVVEKLGDYLITCGY</sequence>
<organism>
    <name type="scientific">Drosophila melanogaster</name>
    <name type="common">Fruit fly</name>
    <dbReference type="NCBI Taxonomy" id="7227"/>
    <lineage>
        <taxon>Eukaryota</taxon>
        <taxon>Metazoa</taxon>
        <taxon>Ecdysozoa</taxon>
        <taxon>Arthropoda</taxon>
        <taxon>Hexapoda</taxon>
        <taxon>Insecta</taxon>
        <taxon>Pterygota</taxon>
        <taxon>Neoptera</taxon>
        <taxon>Endopterygota</taxon>
        <taxon>Diptera</taxon>
        <taxon>Brachycera</taxon>
        <taxon>Muscomorpha</taxon>
        <taxon>Ephydroidea</taxon>
        <taxon>Drosophilidae</taxon>
        <taxon>Drosophila</taxon>
        <taxon>Sophophora</taxon>
    </lineage>
</organism>
<comment type="function">
    <text evidence="1 3">Binds to actin and affects the structure of the cytoskeleton (PubMed:1339308). At high concentrations, profilin prevents the polymerization of actin, whereas it enhances it at low concentrations (PubMed:1339308). By binding to PIP2, it may inhibit the formation of IP3 and DG (PubMed:1339308). This profilin is required for intercellular cytoplasm transport during Drosophila oogenesis (PubMed:1339308). Function in neurons is essential for adult survival, and is important for climbing behavior and activity (PubMed:37041188).</text>
</comment>
<comment type="subunit">
    <text>Occurs in many kinds of cells as a complex with monomeric actin in a 1:1 ratio.</text>
</comment>
<comment type="interaction">
    <interactant intactId="EBI-156199">
        <id>P25843</id>
    </interactant>
    <interactant intactId="EBI-456419">
        <id>Q24306</id>
        <label>Diap1</label>
    </interactant>
    <organismsDiffer>false</organismsDiffer>
    <experiments>2</experiments>
</comment>
<comment type="interaction">
    <interactant intactId="EBI-156199">
        <id>P25843</id>
    </interactant>
    <interactant intactId="EBI-466810">
        <id>Q8T4F7</id>
        <label>ena</label>
    </interactant>
    <organismsDiffer>false</organismsDiffer>
    <experiments>3</experiments>
</comment>
<comment type="interaction">
    <interactant intactId="EBI-156199">
        <id>P25843</id>
    </interactant>
    <interactant intactId="EBI-74845">
        <id>P40792</id>
        <label>Rac1</label>
    </interactant>
    <organismsDiffer>false</organismsDiffer>
    <experiments>3</experiments>
</comment>
<comment type="subcellular location">
    <subcellularLocation>
        <location>Cytoplasm</location>
        <location>Cytoskeleton</location>
    </subcellularLocation>
</comment>
<comment type="tissue specificity">
    <text evidence="2">Expressed in ovary and head.</text>
</comment>
<comment type="disruption phenotype">
    <text evidence="3">RNAi-mediated knockdown in the neurons of adult males significantly reduces survival to 27 percent (PubMed:37041188). Adult survival begins to decrease from approximately day 9 post eclosion (PubMed:37041188). Pan-neuronal or glutamatergic neuron-specific RNAi-mediated knockdown decreases adult climbing behavior (PubMed:37041188). Glutamatergic neuron-specific RNAi-mediated knockdown also decreases activity throughout the day (during both light and dark cycles) (PubMed:37041188).</text>
</comment>
<comment type="similarity">
    <text evidence="4">Belongs to the profilin family.</text>
</comment>